<name>PEPT_SHIBS</name>
<accession>Q31ZK3</accession>
<evidence type="ECO:0000255" key="1">
    <source>
        <dbReference type="HAMAP-Rule" id="MF_00550"/>
    </source>
</evidence>
<proteinExistence type="inferred from homology"/>
<feature type="chain" id="PRO_0000274018" description="Peptidase T">
    <location>
        <begin position="1"/>
        <end position="408"/>
    </location>
</feature>
<feature type="active site" evidence="1">
    <location>
        <position position="80"/>
    </location>
</feature>
<feature type="active site" description="Proton acceptor" evidence="1">
    <location>
        <position position="173"/>
    </location>
</feature>
<feature type="binding site" evidence="1">
    <location>
        <position position="78"/>
    </location>
    <ligand>
        <name>Zn(2+)</name>
        <dbReference type="ChEBI" id="CHEBI:29105"/>
        <label>1</label>
    </ligand>
</feature>
<feature type="binding site" evidence="1">
    <location>
        <position position="140"/>
    </location>
    <ligand>
        <name>Zn(2+)</name>
        <dbReference type="ChEBI" id="CHEBI:29105"/>
        <label>1</label>
    </ligand>
</feature>
<feature type="binding site" evidence="1">
    <location>
        <position position="140"/>
    </location>
    <ligand>
        <name>Zn(2+)</name>
        <dbReference type="ChEBI" id="CHEBI:29105"/>
        <label>2</label>
    </ligand>
</feature>
<feature type="binding site" evidence="1">
    <location>
        <position position="174"/>
    </location>
    <ligand>
        <name>Zn(2+)</name>
        <dbReference type="ChEBI" id="CHEBI:29105"/>
        <label>2</label>
    </ligand>
</feature>
<feature type="binding site" evidence="1">
    <location>
        <position position="196"/>
    </location>
    <ligand>
        <name>Zn(2+)</name>
        <dbReference type="ChEBI" id="CHEBI:29105"/>
        <label>1</label>
    </ligand>
</feature>
<feature type="binding site" evidence="1">
    <location>
        <position position="379"/>
    </location>
    <ligand>
        <name>Zn(2+)</name>
        <dbReference type="ChEBI" id="CHEBI:29105"/>
        <label>2</label>
    </ligand>
</feature>
<keyword id="KW-0031">Aminopeptidase</keyword>
<keyword id="KW-0963">Cytoplasm</keyword>
<keyword id="KW-0378">Hydrolase</keyword>
<keyword id="KW-0479">Metal-binding</keyword>
<keyword id="KW-0482">Metalloprotease</keyword>
<keyword id="KW-0645">Protease</keyword>
<keyword id="KW-0862">Zinc</keyword>
<protein>
    <recommendedName>
        <fullName evidence="1">Peptidase T</fullName>
        <ecNumber evidence="1">3.4.11.4</ecNumber>
    </recommendedName>
    <alternativeName>
        <fullName evidence="1">Aminotripeptidase</fullName>
        <shortName evidence="1">Tripeptidase</shortName>
    </alternativeName>
    <alternativeName>
        <fullName evidence="1">Tripeptide aminopeptidase</fullName>
    </alternativeName>
</protein>
<reference key="1">
    <citation type="journal article" date="2005" name="Nucleic Acids Res.">
        <title>Genome dynamics and diversity of Shigella species, the etiologic agents of bacillary dysentery.</title>
        <authorList>
            <person name="Yang F."/>
            <person name="Yang J."/>
            <person name="Zhang X."/>
            <person name="Chen L."/>
            <person name="Jiang Y."/>
            <person name="Yan Y."/>
            <person name="Tang X."/>
            <person name="Wang J."/>
            <person name="Xiong Z."/>
            <person name="Dong J."/>
            <person name="Xue Y."/>
            <person name="Zhu Y."/>
            <person name="Xu X."/>
            <person name="Sun L."/>
            <person name="Chen S."/>
            <person name="Nie H."/>
            <person name="Peng J."/>
            <person name="Xu J."/>
            <person name="Wang Y."/>
            <person name="Yuan Z."/>
            <person name="Wen Y."/>
            <person name="Yao Z."/>
            <person name="Shen Y."/>
            <person name="Qiang B."/>
            <person name="Hou Y."/>
            <person name="Yu J."/>
            <person name="Jin Q."/>
        </authorList>
    </citation>
    <scope>NUCLEOTIDE SEQUENCE [LARGE SCALE GENOMIC DNA]</scope>
    <source>
        <strain>Sb227</strain>
    </source>
</reference>
<sequence>MDKLLERFLNYVSLDTQSKAGVRQVPSTEGQWKLLHLLKEQLEEMGLINVTLSEKGTLMATLPANVPGDIPAIGFISHVDTSPDCSGKNVNPQIVENYRGGDIALGIGDEVLSPVMFPVLHQLLGQTLITTDGKTLLGADDKAGIAEIMTALAVLQQKNIPHGDIRVAFTPDEEVGKGAKHFDVDAFDARWAYTVDGGGVGELEFENFNAASVNIKIVGNNVHPGTAKGVMVNALSLAARIHAEVPADESPEMTEGYEGFYHLAGMKGTVERADMHYIIRDFDRKQFEARKCKMMEIAKKVGKGLHPDCYIELVIEDSYYNMREKVVEHPHILDIAQQAMRDCDIEPELKPIRGGTDGAQLSFMGLPCPNLFTGGYNYHGKHEFVTLEGMEKAVQVIVRIAELTAQRK</sequence>
<dbReference type="EC" id="3.4.11.4" evidence="1"/>
<dbReference type="EMBL" id="CP000036">
    <property type="protein sequence ID" value="ABB66505.1"/>
    <property type="molecule type" value="Genomic_DNA"/>
</dbReference>
<dbReference type="RefSeq" id="WP_000359437.1">
    <property type="nucleotide sequence ID" value="NC_007613.1"/>
</dbReference>
<dbReference type="SMR" id="Q31ZK3"/>
<dbReference type="MEROPS" id="M20.003"/>
<dbReference type="KEGG" id="sbo:SBO_1912"/>
<dbReference type="HOGENOM" id="CLU_053676_0_0_6"/>
<dbReference type="Proteomes" id="UP000007067">
    <property type="component" value="Chromosome"/>
</dbReference>
<dbReference type="GO" id="GO:0005829">
    <property type="term" value="C:cytosol"/>
    <property type="evidence" value="ECO:0007669"/>
    <property type="project" value="TreeGrafter"/>
</dbReference>
<dbReference type="GO" id="GO:0008237">
    <property type="term" value="F:metallopeptidase activity"/>
    <property type="evidence" value="ECO:0007669"/>
    <property type="project" value="UniProtKB-KW"/>
</dbReference>
<dbReference type="GO" id="GO:0045148">
    <property type="term" value="F:tripeptide aminopeptidase activity"/>
    <property type="evidence" value="ECO:0007669"/>
    <property type="project" value="UniProtKB-UniRule"/>
</dbReference>
<dbReference type="GO" id="GO:0008270">
    <property type="term" value="F:zinc ion binding"/>
    <property type="evidence" value="ECO:0007669"/>
    <property type="project" value="UniProtKB-UniRule"/>
</dbReference>
<dbReference type="GO" id="GO:0043171">
    <property type="term" value="P:peptide catabolic process"/>
    <property type="evidence" value="ECO:0007669"/>
    <property type="project" value="UniProtKB-UniRule"/>
</dbReference>
<dbReference type="GO" id="GO:0006508">
    <property type="term" value="P:proteolysis"/>
    <property type="evidence" value="ECO:0007669"/>
    <property type="project" value="UniProtKB-UniRule"/>
</dbReference>
<dbReference type="CDD" id="cd03892">
    <property type="entry name" value="M20_peptT"/>
    <property type="match status" value="1"/>
</dbReference>
<dbReference type="FunFam" id="3.30.70.360:FF:000002">
    <property type="entry name" value="Peptidase T"/>
    <property type="match status" value="1"/>
</dbReference>
<dbReference type="Gene3D" id="3.30.70.360">
    <property type="match status" value="1"/>
</dbReference>
<dbReference type="Gene3D" id="3.40.630.10">
    <property type="entry name" value="Zn peptidases"/>
    <property type="match status" value="1"/>
</dbReference>
<dbReference type="HAMAP" id="MF_00550">
    <property type="entry name" value="Aminopeptidase_M20"/>
    <property type="match status" value="1"/>
</dbReference>
<dbReference type="InterPro" id="IPR001261">
    <property type="entry name" value="ArgE/DapE_CS"/>
</dbReference>
<dbReference type="InterPro" id="IPR036264">
    <property type="entry name" value="Bact_exopeptidase_dim_dom"/>
</dbReference>
<dbReference type="InterPro" id="IPR002933">
    <property type="entry name" value="Peptidase_M20"/>
</dbReference>
<dbReference type="InterPro" id="IPR011650">
    <property type="entry name" value="Peptidase_M20_dimer"/>
</dbReference>
<dbReference type="InterPro" id="IPR010161">
    <property type="entry name" value="Peptidase_M20B"/>
</dbReference>
<dbReference type="NCBIfam" id="TIGR01882">
    <property type="entry name" value="peptidase-T"/>
    <property type="match status" value="1"/>
</dbReference>
<dbReference type="NCBIfam" id="NF003976">
    <property type="entry name" value="PRK05469.1"/>
    <property type="match status" value="1"/>
</dbReference>
<dbReference type="NCBIfam" id="NF009920">
    <property type="entry name" value="PRK13381.1"/>
    <property type="match status" value="1"/>
</dbReference>
<dbReference type="PANTHER" id="PTHR42994">
    <property type="entry name" value="PEPTIDASE T"/>
    <property type="match status" value="1"/>
</dbReference>
<dbReference type="PANTHER" id="PTHR42994:SF1">
    <property type="entry name" value="PEPTIDASE T"/>
    <property type="match status" value="1"/>
</dbReference>
<dbReference type="Pfam" id="PF07687">
    <property type="entry name" value="M20_dimer"/>
    <property type="match status" value="1"/>
</dbReference>
<dbReference type="Pfam" id="PF01546">
    <property type="entry name" value="Peptidase_M20"/>
    <property type="match status" value="1"/>
</dbReference>
<dbReference type="PIRSF" id="PIRSF037215">
    <property type="entry name" value="Peptidase_M20B"/>
    <property type="match status" value="1"/>
</dbReference>
<dbReference type="SUPFAM" id="SSF55031">
    <property type="entry name" value="Bacterial exopeptidase dimerisation domain"/>
    <property type="match status" value="1"/>
</dbReference>
<dbReference type="SUPFAM" id="SSF53187">
    <property type="entry name" value="Zn-dependent exopeptidases"/>
    <property type="match status" value="1"/>
</dbReference>
<dbReference type="PROSITE" id="PS00758">
    <property type="entry name" value="ARGE_DAPE_CPG2_1"/>
    <property type="match status" value="1"/>
</dbReference>
<dbReference type="PROSITE" id="PS00759">
    <property type="entry name" value="ARGE_DAPE_CPG2_2"/>
    <property type="match status" value="1"/>
</dbReference>
<comment type="function">
    <text evidence="1">Cleaves the N-terminal amino acid of tripeptides.</text>
</comment>
<comment type="catalytic activity">
    <reaction evidence="1">
        <text>Release of the N-terminal residue from a tripeptide.</text>
        <dbReference type="EC" id="3.4.11.4"/>
    </reaction>
</comment>
<comment type="cofactor">
    <cofactor evidence="1">
        <name>Zn(2+)</name>
        <dbReference type="ChEBI" id="CHEBI:29105"/>
    </cofactor>
    <text evidence="1">Binds 2 Zn(2+) ions per subunit.</text>
</comment>
<comment type="subcellular location">
    <subcellularLocation>
        <location evidence="1">Cytoplasm</location>
    </subcellularLocation>
</comment>
<comment type="similarity">
    <text evidence="1">Belongs to the peptidase M20B family.</text>
</comment>
<gene>
    <name evidence="1" type="primary">pepT</name>
    <name type="ordered locus">SBO_1912</name>
</gene>
<organism>
    <name type="scientific">Shigella boydii serotype 4 (strain Sb227)</name>
    <dbReference type="NCBI Taxonomy" id="300268"/>
    <lineage>
        <taxon>Bacteria</taxon>
        <taxon>Pseudomonadati</taxon>
        <taxon>Pseudomonadota</taxon>
        <taxon>Gammaproteobacteria</taxon>
        <taxon>Enterobacterales</taxon>
        <taxon>Enterobacteriaceae</taxon>
        <taxon>Shigella</taxon>
    </lineage>
</organism>